<name>GLF_MYCPN</name>
<sequence length="399" mass="45910">MTLFSFPNYVNWNKFDFIVLGAGISGIVLSHVLAQHGKSVLLLEKRNQLGGNCYDKLDETTGLLFHQYGPHIFHTDNQKVMDFIQPFFELNNYQHRVGLQLDNNLDLTLPFDFSQMRKLLDTKTASSLINFFQQHFPAEKHLTLMQLQTINFAPVQQLYQFLKIKVYGPYSVKMWGMPLEQIDPSVLGRVKISLSENSSYFPTATIQGLPKGGYTKAFTKMVDHPLIDLRLNCPANLISVNNNQLLFANQPITKPVVYCGLIDQLFGYCFGRLQYRSLHFEWKRYAVKQHQAYPVMNWPLHPTITRQVEYKQLTQEGLESNQTIVSCETPGAFREGDPRFMEPYYPLNDVSNNALFARYLKLANAIPNIHLLGRLALYQYIDMDRAIAQSLAKAEQLLQ</sequence>
<dbReference type="EC" id="5.4.99.9"/>
<dbReference type="EMBL" id="U00089">
    <property type="protein sequence ID" value="AAB96205.1"/>
    <property type="molecule type" value="Genomic_DNA"/>
</dbReference>
<dbReference type="PIR" id="S73883">
    <property type="entry name" value="S73883"/>
</dbReference>
<dbReference type="RefSeq" id="NP_109966.1">
    <property type="nucleotide sequence ID" value="NC_000912.1"/>
</dbReference>
<dbReference type="RefSeq" id="WP_010874635.1">
    <property type="nucleotide sequence ID" value="NZ_OU342337.1"/>
</dbReference>
<dbReference type="SMR" id="P75499"/>
<dbReference type="IntAct" id="P75499">
    <property type="interactions" value="2"/>
</dbReference>
<dbReference type="STRING" id="272634.MPN_278"/>
<dbReference type="EnsemblBacteria" id="AAB96205">
    <property type="protein sequence ID" value="AAB96205"/>
    <property type="gene ID" value="MPN_278"/>
</dbReference>
<dbReference type="KEGG" id="mpn:MPN_278"/>
<dbReference type="PATRIC" id="fig|272634.6.peg.298"/>
<dbReference type="HOGENOM" id="CLU_042118_0_0_14"/>
<dbReference type="OrthoDB" id="9769600at2"/>
<dbReference type="BioCyc" id="MPNE272634:G1GJ3-437-MONOMER"/>
<dbReference type="Proteomes" id="UP000000808">
    <property type="component" value="Chromosome"/>
</dbReference>
<dbReference type="GO" id="GO:0005829">
    <property type="term" value="C:cytosol"/>
    <property type="evidence" value="ECO:0007669"/>
    <property type="project" value="TreeGrafter"/>
</dbReference>
<dbReference type="GO" id="GO:0050660">
    <property type="term" value="F:flavin adenine dinucleotide binding"/>
    <property type="evidence" value="ECO:0007669"/>
    <property type="project" value="TreeGrafter"/>
</dbReference>
<dbReference type="GO" id="GO:0008767">
    <property type="term" value="F:UDP-galactopyranose mutase activity"/>
    <property type="evidence" value="ECO:0007669"/>
    <property type="project" value="UniProtKB-EC"/>
</dbReference>
<dbReference type="Gene3D" id="3.40.50.720">
    <property type="entry name" value="NAD(P)-binding Rossmann-like Domain"/>
    <property type="match status" value="3"/>
</dbReference>
<dbReference type="InterPro" id="IPR004379">
    <property type="entry name" value="UDP-GALP_mutase"/>
</dbReference>
<dbReference type="InterPro" id="IPR015899">
    <property type="entry name" value="UDP-GalPyranose_mutase_C"/>
</dbReference>
<dbReference type="NCBIfam" id="TIGR00031">
    <property type="entry name" value="UDP-GALP_mutase"/>
    <property type="match status" value="1"/>
</dbReference>
<dbReference type="PANTHER" id="PTHR21197">
    <property type="entry name" value="UDP-GALACTOPYRANOSE MUTASE"/>
    <property type="match status" value="1"/>
</dbReference>
<dbReference type="PANTHER" id="PTHR21197:SF0">
    <property type="entry name" value="UDP-GALACTOPYRANOSE MUTASE"/>
    <property type="match status" value="1"/>
</dbReference>
<dbReference type="Pfam" id="PF03275">
    <property type="entry name" value="GLF"/>
    <property type="match status" value="1"/>
</dbReference>
<dbReference type="Pfam" id="PF13450">
    <property type="entry name" value="NAD_binding_8"/>
    <property type="match status" value="1"/>
</dbReference>
<dbReference type="SUPFAM" id="SSF54373">
    <property type="entry name" value="FAD-linked reductases, C-terminal domain"/>
    <property type="match status" value="1"/>
</dbReference>
<dbReference type="SUPFAM" id="SSF51971">
    <property type="entry name" value="Nucleotide-binding domain"/>
    <property type="match status" value="1"/>
</dbReference>
<gene>
    <name type="primary">glf</name>
    <name type="ordered locus">MPN_278</name>
    <name type="ORF">MP557</name>
</gene>
<protein>
    <recommendedName>
        <fullName>UDP-galactopyranose mutase</fullName>
        <shortName>UGM</shortName>
        <ecNumber>5.4.99.9</ecNumber>
    </recommendedName>
    <alternativeName>
        <fullName>UDP-GALP mutase</fullName>
    </alternativeName>
    <alternativeName>
        <fullName>Uridine 5-diphosphate galactopyranose mutase</fullName>
    </alternativeName>
</protein>
<feature type="chain" id="PRO_0000087510" description="UDP-galactopyranose mutase">
    <location>
        <begin position="1"/>
        <end position="399"/>
    </location>
</feature>
<feature type="binding site" evidence="1">
    <location>
        <position position="25"/>
    </location>
    <ligand>
        <name>FAD</name>
        <dbReference type="ChEBI" id="CHEBI:57692"/>
    </ligand>
</feature>
<feature type="binding site" evidence="1">
    <location>
        <begin position="44"/>
        <end position="45"/>
    </location>
    <ligand>
        <name>FAD</name>
        <dbReference type="ChEBI" id="CHEBI:57692"/>
    </ligand>
</feature>
<feature type="binding site" evidence="1">
    <location>
        <position position="52"/>
    </location>
    <ligand>
        <name>FAD</name>
        <dbReference type="ChEBI" id="CHEBI:57692"/>
    </ligand>
</feature>
<feature type="binding site" evidence="1">
    <location>
        <begin position="71"/>
        <end position="72"/>
    </location>
    <ligand>
        <name>FAD</name>
        <dbReference type="ChEBI" id="CHEBI:57692"/>
    </ligand>
</feature>
<feature type="binding site" evidence="1">
    <location>
        <position position="171"/>
    </location>
    <ligand>
        <name>UDP-alpha-D-galactose</name>
        <dbReference type="ChEBI" id="CHEBI:66914"/>
    </ligand>
</feature>
<feature type="binding site" evidence="1">
    <location>
        <position position="175"/>
    </location>
    <ligand>
        <name>UDP-alpha-D-galactose</name>
        <dbReference type="ChEBI" id="CHEBI:66914"/>
    </ligand>
</feature>
<feature type="binding site" evidence="1">
    <location>
        <position position="200"/>
    </location>
    <ligand>
        <name>UDP-alpha-D-galactose</name>
        <dbReference type="ChEBI" id="CHEBI:66914"/>
    </ligand>
</feature>
<feature type="binding site" evidence="1">
    <location>
        <position position="297"/>
    </location>
    <ligand>
        <name>UDP-alpha-D-galactose</name>
        <dbReference type="ChEBI" id="CHEBI:66914"/>
    </ligand>
</feature>
<feature type="binding site" evidence="1">
    <location>
        <position position="306"/>
    </location>
    <ligand>
        <name>UDP-alpha-D-galactose</name>
        <dbReference type="ChEBI" id="CHEBI:66914"/>
    </ligand>
</feature>
<feature type="binding site" evidence="1">
    <location>
        <position position="345"/>
    </location>
    <ligand>
        <name>UDP-alpha-D-galactose</name>
        <dbReference type="ChEBI" id="CHEBI:66914"/>
    </ligand>
</feature>
<feature type="binding site" evidence="1">
    <location>
        <position position="374"/>
    </location>
    <ligand>
        <name>FAD</name>
        <dbReference type="ChEBI" id="CHEBI:57692"/>
    </ligand>
</feature>
<feature type="binding site" evidence="1">
    <location>
        <position position="380"/>
    </location>
    <ligand>
        <name>UDP-alpha-D-galactose</name>
        <dbReference type="ChEBI" id="CHEBI:66914"/>
    </ligand>
</feature>
<feature type="binding site" evidence="1">
    <location>
        <begin position="381"/>
        <end position="386"/>
    </location>
    <ligand>
        <name>FAD</name>
        <dbReference type="ChEBI" id="CHEBI:57692"/>
    </ligand>
</feature>
<organism>
    <name type="scientific">Mycoplasma pneumoniae (strain ATCC 29342 / M129 / Subtype 1)</name>
    <name type="common">Mycoplasmoides pneumoniae</name>
    <dbReference type="NCBI Taxonomy" id="272634"/>
    <lineage>
        <taxon>Bacteria</taxon>
        <taxon>Bacillati</taxon>
        <taxon>Mycoplasmatota</taxon>
        <taxon>Mycoplasmoidales</taxon>
        <taxon>Mycoplasmoidaceae</taxon>
        <taxon>Mycoplasmoides</taxon>
    </lineage>
</organism>
<reference key="1">
    <citation type="journal article" date="1996" name="Nucleic Acids Res.">
        <title>Complete sequence analysis of the genome of the bacterium Mycoplasma pneumoniae.</title>
        <authorList>
            <person name="Himmelreich R."/>
            <person name="Hilbert H."/>
            <person name="Plagens H."/>
            <person name="Pirkl E."/>
            <person name="Li B.-C."/>
            <person name="Herrmann R."/>
        </authorList>
    </citation>
    <scope>NUCLEOTIDE SEQUENCE [LARGE SCALE GENOMIC DNA]</scope>
    <source>
        <strain>ATCC 29342 / M129 / Subtype 1</strain>
    </source>
</reference>
<evidence type="ECO:0000250" key="1"/>
<evidence type="ECO:0000305" key="2"/>
<proteinExistence type="inferred from homology"/>
<comment type="function">
    <text evidence="1">Involved in the conversion of UDP-GalP into UDP-GalF through a 2-keto intermediate.</text>
</comment>
<comment type="catalytic activity">
    <reaction>
        <text>UDP-alpha-D-galactose = UDP-alpha-D-galactofuranose</text>
        <dbReference type="Rhea" id="RHEA:24132"/>
        <dbReference type="ChEBI" id="CHEBI:66914"/>
        <dbReference type="ChEBI" id="CHEBI:66915"/>
        <dbReference type="EC" id="5.4.99.9"/>
    </reaction>
</comment>
<comment type="cofactor">
    <cofactor evidence="1">
        <name>FAD</name>
        <dbReference type="ChEBI" id="CHEBI:57692"/>
    </cofactor>
</comment>
<comment type="similarity">
    <text evidence="2">Belongs to the UDP-galactopyranose/dTDP-fucopyranose mutase family.</text>
</comment>
<accession>P75499</accession>
<keyword id="KW-0274">FAD</keyword>
<keyword id="KW-0285">Flavoprotein</keyword>
<keyword id="KW-0413">Isomerase</keyword>
<keyword id="KW-1185">Reference proteome</keyword>